<feature type="chain" id="PRO_0000231362" description="S-adenosylmethionine:tRNA ribosyltransferase-isomerase">
    <location>
        <begin position="1"/>
        <end position="403"/>
    </location>
</feature>
<organism>
    <name type="scientific">Psychrobacter arcticus (strain DSM 17307 / VKM B-2377 / 273-4)</name>
    <dbReference type="NCBI Taxonomy" id="259536"/>
    <lineage>
        <taxon>Bacteria</taxon>
        <taxon>Pseudomonadati</taxon>
        <taxon>Pseudomonadota</taxon>
        <taxon>Gammaproteobacteria</taxon>
        <taxon>Moraxellales</taxon>
        <taxon>Moraxellaceae</taxon>
        <taxon>Psychrobacter</taxon>
    </lineage>
</organism>
<reference key="1">
    <citation type="journal article" date="2010" name="Appl. Environ. Microbiol.">
        <title>The genome sequence of Psychrobacter arcticus 273-4, a psychroactive Siberian permafrost bacterium, reveals mechanisms for adaptation to low-temperature growth.</title>
        <authorList>
            <person name="Ayala-del-Rio H.L."/>
            <person name="Chain P.S."/>
            <person name="Grzymski J.J."/>
            <person name="Ponder M.A."/>
            <person name="Ivanova N."/>
            <person name="Bergholz P.W."/>
            <person name="Di Bartolo G."/>
            <person name="Hauser L."/>
            <person name="Land M."/>
            <person name="Bakermans C."/>
            <person name="Rodrigues D."/>
            <person name="Klappenbach J."/>
            <person name="Zarka D."/>
            <person name="Larimer F."/>
            <person name="Richardson P."/>
            <person name="Murray A."/>
            <person name="Thomashow M."/>
            <person name="Tiedje J.M."/>
        </authorList>
    </citation>
    <scope>NUCLEOTIDE SEQUENCE [LARGE SCALE GENOMIC DNA]</scope>
    <source>
        <strain>DSM 17307 / VKM B-2377 / 273-4</strain>
    </source>
</reference>
<proteinExistence type="inferred from homology"/>
<comment type="function">
    <text evidence="1">Transfers and isomerizes the ribose moiety from AdoMet to the 7-aminomethyl group of 7-deazaguanine (preQ1-tRNA) to give epoxyqueuosine (oQ-tRNA).</text>
</comment>
<comment type="catalytic activity">
    <reaction evidence="1">
        <text>7-aminomethyl-7-carbaguanosine(34) in tRNA + S-adenosyl-L-methionine = epoxyqueuosine(34) in tRNA + adenine + L-methionine + 2 H(+)</text>
        <dbReference type="Rhea" id="RHEA:32155"/>
        <dbReference type="Rhea" id="RHEA-COMP:10342"/>
        <dbReference type="Rhea" id="RHEA-COMP:18582"/>
        <dbReference type="ChEBI" id="CHEBI:15378"/>
        <dbReference type="ChEBI" id="CHEBI:16708"/>
        <dbReference type="ChEBI" id="CHEBI:57844"/>
        <dbReference type="ChEBI" id="CHEBI:59789"/>
        <dbReference type="ChEBI" id="CHEBI:82833"/>
        <dbReference type="ChEBI" id="CHEBI:194443"/>
        <dbReference type="EC" id="2.4.99.17"/>
    </reaction>
</comment>
<comment type="pathway">
    <text evidence="1">tRNA modification; tRNA-queuosine biosynthesis.</text>
</comment>
<comment type="subunit">
    <text evidence="1">Monomer.</text>
</comment>
<comment type="subcellular location">
    <subcellularLocation>
        <location evidence="1">Cytoplasm</location>
    </subcellularLocation>
</comment>
<comment type="similarity">
    <text evidence="1">Belongs to the QueA family.</text>
</comment>
<gene>
    <name evidence="1" type="primary">queA</name>
    <name type="ordered locus">Psyc_1404</name>
</gene>
<name>QUEA_PSYA2</name>
<protein>
    <recommendedName>
        <fullName evidence="1">S-adenosylmethionine:tRNA ribosyltransferase-isomerase</fullName>
        <ecNumber evidence="1">2.4.99.17</ecNumber>
    </recommendedName>
    <alternativeName>
        <fullName evidence="1">Queuosine biosynthesis protein QueA</fullName>
    </alternativeName>
</protein>
<evidence type="ECO:0000255" key="1">
    <source>
        <dbReference type="HAMAP-Rule" id="MF_00113"/>
    </source>
</evidence>
<accession>Q4FRV6</accession>
<dbReference type="EC" id="2.4.99.17" evidence="1"/>
<dbReference type="EMBL" id="CP000082">
    <property type="protein sequence ID" value="AAZ19252.1"/>
    <property type="molecule type" value="Genomic_DNA"/>
</dbReference>
<dbReference type="RefSeq" id="WP_011280673.1">
    <property type="nucleotide sequence ID" value="NC_007204.1"/>
</dbReference>
<dbReference type="SMR" id="Q4FRV6"/>
<dbReference type="STRING" id="259536.Psyc_1404"/>
<dbReference type="KEGG" id="par:Psyc_1404"/>
<dbReference type="eggNOG" id="COG0809">
    <property type="taxonomic scope" value="Bacteria"/>
</dbReference>
<dbReference type="HOGENOM" id="CLU_039110_1_0_6"/>
<dbReference type="OrthoDB" id="9805933at2"/>
<dbReference type="UniPathway" id="UPA00392"/>
<dbReference type="Proteomes" id="UP000000546">
    <property type="component" value="Chromosome"/>
</dbReference>
<dbReference type="GO" id="GO:0005737">
    <property type="term" value="C:cytoplasm"/>
    <property type="evidence" value="ECO:0007669"/>
    <property type="project" value="UniProtKB-SubCell"/>
</dbReference>
<dbReference type="GO" id="GO:0051075">
    <property type="term" value="F:S-adenosylmethionine:tRNA ribosyltransferase-isomerase activity"/>
    <property type="evidence" value="ECO:0007669"/>
    <property type="project" value="UniProtKB-EC"/>
</dbReference>
<dbReference type="GO" id="GO:0008616">
    <property type="term" value="P:queuosine biosynthetic process"/>
    <property type="evidence" value="ECO:0007669"/>
    <property type="project" value="UniProtKB-UniRule"/>
</dbReference>
<dbReference type="GO" id="GO:0002099">
    <property type="term" value="P:tRNA wobble guanine modification"/>
    <property type="evidence" value="ECO:0007669"/>
    <property type="project" value="TreeGrafter"/>
</dbReference>
<dbReference type="FunFam" id="3.40.1780.10:FF:000001">
    <property type="entry name" value="S-adenosylmethionine:tRNA ribosyltransferase-isomerase"/>
    <property type="match status" value="1"/>
</dbReference>
<dbReference type="Gene3D" id="2.40.10.240">
    <property type="entry name" value="QueA-like"/>
    <property type="match status" value="1"/>
</dbReference>
<dbReference type="Gene3D" id="3.40.1780.10">
    <property type="entry name" value="QueA-like"/>
    <property type="match status" value="1"/>
</dbReference>
<dbReference type="HAMAP" id="MF_00113">
    <property type="entry name" value="QueA"/>
    <property type="match status" value="1"/>
</dbReference>
<dbReference type="InterPro" id="IPR003699">
    <property type="entry name" value="QueA"/>
</dbReference>
<dbReference type="InterPro" id="IPR042118">
    <property type="entry name" value="QueA_dom1"/>
</dbReference>
<dbReference type="InterPro" id="IPR042119">
    <property type="entry name" value="QueA_dom2"/>
</dbReference>
<dbReference type="InterPro" id="IPR036100">
    <property type="entry name" value="QueA_sf"/>
</dbReference>
<dbReference type="NCBIfam" id="NF001140">
    <property type="entry name" value="PRK00147.1"/>
    <property type="match status" value="1"/>
</dbReference>
<dbReference type="NCBIfam" id="TIGR00113">
    <property type="entry name" value="queA"/>
    <property type="match status" value="1"/>
</dbReference>
<dbReference type="PANTHER" id="PTHR30307">
    <property type="entry name" value="S-ADENOSYLMETHIONINE:TRNA RIBOSYLTRANSFERASE-ISOMERASE"/>
    <property type="match status" value="1"/>
</dbReference>
<dbReference type="PANTHER" id="PTHR30307:SF0">
    <property type="entry name" value="S-ADENOSYLMETHIONINE:TRNA RIBOSYLTRANSFERASE-ISOMERASE"/>
    <property type="match status" value="1"/>
</dbReference>
<dbReference type="Pfam" id="PF02547">
    <property type="entry name" value="Queuosine_synth"/>
    <property type="match status" value="1"/>
</dbReference>
<dbReference type="SUPFAM" id="SSF111337">
    <property type="entry name" value="QueA-like"/>
    <property type="match status" value="1"/>
</dbReference>
<keyword id="KW-0963">Cytoplasm</keyword>
<keyword id="KW-0671">Queuosine biosynthesis</keyword>
<keyword id="KW-1185">Reference proteome</keyword>
<keyword id="KW-0949">S-adenosyl-L-methionine</keyword>
<keyword id="KW-0808">Transferase</keyword>
<sequence length="403" mass="44530">MTDSEPQTLNNNSEITANHNDDILEYLSVDDYDYELPDQLIARYPLAQRSASKLLYLPTNNANSQVEDKLFSELPDILNAGDLIVFNDTKVMKARLFGQKDTGGKIEVLIERLVSLSDVNSAYLDEIIANSKTIDTTIIAEKHIALCHIKASKALKLGQGLVLADGHMTGIMIGRQENLFILAFDTPILPDLEQYGELPIPPYFERHADATDNTRYQTVFHDPAKLASVAAPTASLHFDDIVLEKLAAKGIQTAFVTLHVGAGTFAPVKTDNLLNHTMHSEYAHLPQATAELINQTHANGKQVIAIGTTVTRVLETAYQQTAVDGQSLSGWSGDTDIFIYPGFKFGVVDKLLTNFHLPKSTLLMLVSAFATKKSIEQAYQHAIKSQYRFFSYGDAMLLDKQVD</sequence>